<reference key="1">
    <citation type="journal article" date="2005" name="Nature">
        <title>The genome of the social amoeba Dictyostelium discoideum.</title>
        <authorList>
            <person name="Eichinger L."/>
            <person name="Pachebat J.A."/>
            <person name="Gloeckner G."/>
            <person name="Rajandream M.A."/>
            <person name="Sucgang R."/>
            <person name="Berriman M."/>
            <person name="Song J."/>
            <person name="Olsen R."/>
            <person name="Szafranski K."/>
            <person name="Xu Q."/>
            <person name="Tunggal B."/>
            <person name="Kummerfeld S."/>
            <person name="Madera M."/>
            <person name="Konfortov B.A."/>
            <person name="Rivero F."/>
            <person name="Bankier A.T."/>
            <person name="Lehmann R."/>
            <person name="Hamlin N."/>
            <person name="Davies R."/>
            <person name="Gaudet P."/>
            <person name="Fey P."/>
            <person name="Pilcher K."/>
            <person name="Chen G."/>
            <person name="Saunders D."/>
            <person name="Sodergren E.J."/>
            <person name="Davis P."/>
            <person name="Kerhornou A."/>
            <person name="Nie X."/>
            <person name="Hall N."/>
            <person name="Anjard C."/>
            <person name="Hemphill L."/>
            <person name="Bason N."/>
            <person name="Farbrother P."/>
            <person name="Desany B."/>
            <person name="Just E."/>
            <person name="Morio T."/>
            <person name="Rost R."/>
            <person name="Churcher C.M."/>
            <person name="Cooper J."/>
            <person name="Haydock S."/>
            <person name="van Driessche N."/>
            <person name="Cronin A."/>
            <person name="Goodhead I."/>
            <person name="Muzny D.M."/>
            <person name="Mourier T."/>
            <person name="Pain A."/>
            <person name="Lu M."/>
            <person name="Harper D."/>
            <person name="Lindsay R."/>
            <person name="Hauser H."/>
            <person name="James K.D."/>
            <person name="Quiles M."/>
            <person name="Madan Babu M."/>
            <person name="Saito T."/>
            <person name="Buchrieser C."/>
            <person name="Wardroper A."/>
            <person name="Felder M."/>
            <person name="Thangavelu M."/>
            <person name="Johnson D."/>
            <person name="Knights A."/>
            <person name="Loulseged H."/>
            <person name="Mungall K.L."/>
            <person name="Oliver K."/>
            <person name="Price C."/>
            <person name="Quail M.A."/>
            <person name="Urushihara H."/>
            <person name="Hernandez J."/>
            <person name="Rabbinowitsch E."/>
            <person name="Steffen D."/>
            <person name="Sanders M."/>
            <person name="Ma J."/>
            <person name="Kohara Y."/>
            <person name="Sharp S."/>
            <person name="Simmonds M.N."/>
            <person name="Spiegler S."/>
            <person name="Tivey A."/>
            <person name="Sugano S."/>
            <person name="White B."/>
            <person name="Walker D."/>
            <person name="Woodward J.R."/>
            <person name="Winckler T."/>
            <person name="Tanaka Y."/>
            <person name="Shaulsky G."/>
            <person name="Schleicher M."/>
            <person name="Weinstock G.M."/>
            <person name="Rosenthal A."/>
            <person name="Cox E.C."/>
            <person name="Chisholm R.L."/>
            <person name="Gibbs R.A."/>
            <person name="Loomis W.F."/>
            <person name="Platzer M."/>
            <person name="Kay R.R."/>
            <person name="Williams J.G."/>
            <person name="Dear P.H."/>
            <person name="Noegel A.A."/>
            <person name="Barrell B.G."/>
            <person name="Kuspa A."/>
        </authorList>
    </citation>
    <scope>NUCLEOTIDE SEQUENCE [LARGE SCALE GENOMIC DNA]</scope>
    <source>
        <strain>AX4</strain>
    </source>
</reference>
<reference key="2">
    <citation type="submission" date="2009-07" db="UniProtKB">
        <authorList>
            <person name="Bienvenut W.V."/>
            <person name="Ura S."/>
            <person name="Insall R.H."/>
        </authorList>
    </citation>
    <scope>PROTEIN SEQUENCE OF 82-96; 159-176 AND 196-202</scope>
    <scope>IDENTIFICATION BY MASS SPECTROMETRY</scope>
    <source>
        <strain>AX2</strain>
    </source>
</reference>
<keyword id="KW-0903">Direct protein sequencing</keyword>
<keyword id="KW-1185">Reference proteome</keyword>
<keyword id="KW-0687">Ribonucleoprotein</keyword>
<keyword id="KW-0689">Ribosomal protein</keyword>
<feature type="chain" id="PRO_0000319986" description="Small ribosomal subunit protein eS8">
    <location>
        <begin position="1"/>
        <end position="211"/>
    </location>
</feature>
<evidence type="ECO:0000305" key="1"/>
<protein>
    <recommendedName>
        <fullName evidence="1">Small ribosomal subunit protein eS8</fullName>
    </recommendedName>
    <alternativeName>
        <fullName>40S ribosomal protein S8</fullName>
    </alternativeName>
</protein>
<comment type="similarity">
    <text evidence="1">Belongs to the eukaryotic ribosomal protein eS8 family.</text>
</comment>
<proteinExistence type="evidence at protein level"/>
<sequence>MGISRDALHKHRLTGAARKCNYKKRKYELGRQAAKTKICSQGEEKRVRSIRVRGGHQKFRALRLDTGNFSWATEKITRKCRILNVVYNATSNDLVRTNTLVKGSIVQIDATPYKQWYETHYGVVVGKKKSAKKDGEAEQVVKKSASLLAKLASRAKGRVLDSAIESQIGEGRFFARITSRPGQVGKCDGYILEAKELEFYQRRLQKKKSAK</sequence>
<organism>
    <name type="scientific">Dictyostelium discoideum</name>
    <name type="common">Social amoeba</name>
    <dbReference type="NCBI Taxonomy" id="44689"/>
    <lineage>
        <taxon>Eukaryota</taxon>
        <taxon>Amoebozoa</taxon>
        <taxon>Evosea</taxon>
        <taxon>Eumycetozoa</taxon>
        <taxon>Dictyostelia</taxon>
        <taxon>Dictyosteliales</taxon>
        <taxon>Dictyosteliaceae</taxon>
        <taxon>Dictyostelium</taxon>
    </lineage>
</organism>
<accession>Q54E24</accession>
<gene>
    <name type="primary">rps8</name>
    <name type="ORF">DDB_G0291864</name>
</gene>
<dbReference type="EMBL" id="AAFI02000186">
    <property type="protein sequence ID" value="EAL61462.1"/>
    <property type="molecule type" value="Genomic_DNA"/>
</dbReference>
<dbReference type="RefSeq" id="XP_629872.1">
    <property type="nucleotide sequence ID" value="XM_629870.1"/>
</dbReference>
<dbReference type="SMR" id="Q54E24"/>
<dbReference type="FunCoup" id="Q54E24">
    <property type="interactions" value="514"/>
</dbReference>
<dbReference type="STRING" id="44689.Q54E24"/>
<dbReference type="PaxDb" id="44689-DDB0230025"/>
<dbReference type="EnsemblProtists" id="EAL61462">
    <property type="protein sequence ID" value="EAL61462"/>
    <property type="gene ID" value="DDB_G0291864"/>
</dbReference>
<dbReference type="GeneID" id="8628370"/>
<dbReference type="KEGG" id="ddi:DDB_G0291864"/>
<dbReference type="dictyBase" id="DDB_G0291864">
    <property type="gene designation" value="rps8"/>
</dbReference>
<dbReference type="VEuPathDB" id="AmoebaDB:DDB_G0291864"/>
<dbReference type="eggNOG" id="KOG3283">
    <property type="taxonomic scope" value="Eukaryota"/>
</dbReference>
<dbReference type="HOGENOM" id="CLU_080597_1_1_1"/>
<dbReference type="InParanoid" id="Q54E24"/>
<dbReference type="OMA" id="QRPHYRK"/>
<dbReference type="PhylomeDB" id="Q54E24"/>
<dbReference type="Reactome" id="R-DDI-156827">
    <property type="pathway name" value="L13a-mediated translational silencing of Ceruloplasmin expression"/>
</dbReference>
<dbReference type="Reactome" id="R-DDI-1799339">
    <property type="pathway name" value="SRP-dependent cotranslational protein targeting to membrane"/>
</dbReference>
<dbReference type="Reactome" id="R-DDI-72689">
    <property type="pathway name" value="Formation of a pool of free 40S subunits"/>
</dbReference>
<dbReference type="Reactome" id="R-DDI-72695">
    <property type="pathway name" value="Formation of the ternary complex, and subsequently, the 43S complex"/>
</dbReference>
<dbReference type="Reactome" id="R-DDI-72702">
    <property type="pathway name" value="Ribosomal scanning and start codon recognition"/>
</dbReference>
<dbReference type="Reactome" id="R-DDI-72706">
    <property type="pathway name" value="GTP hydrolysis and joining of the 60S ribosomal subunit"/>
</dbReference>
<dbReference type="Reactome" id="R-DDI-975956">
    <property type="pathway name" value="Nonsense Mediated Decay (NMD) independent of the Exon Junction Complex (EJC)"/>
</dbReference>
<dbReference type="Reactome" id="R-DDI-975957">
    <property type="pathway name" value="Nonsense Mediated Decay (NMD) enhanced by the Exon Junction Complex (EJC)"/>
</dbReference>
<dbReference type="PRO" id="PR:Q54E24"/>
<dbReference type="Proteomes" id="UP000002195">
    <property type="component" value="Chromosome 6"/>
</dbReference>
<dbReference type="GO" id="GO:0022627">
    <property type="term" value="C:cytosolic small ribosomal subunit"/>
    <property type="evidence" value="ECO:0000318"/>
    <property type="project" value="GO_Central"/>
</dbReference>
<dbReference type="GO" id="GO:0031012">
    <property type="term" value="C:extracellular matrix"/>
    <property type="evidence" value="ECO:0007005"/>
    <property type="project" value="dictyBase"/>
</dbReference>
<dbReference type="GO" id="GO:0003735">
    <property type="term" value="F:structural constituent of ribosome"/>
    <property type="evidence" value="ECO:0000250"/>
    <property type="project" value="dictyBase"/>
</dbReference>
<dbReference type="GO" id="GO:0000462">
    <property type="term" value="P:maturation of SSU-rRNA from tricistronic rRNA transcript (SSU-rRNA, 5.8S rRNA, LSU-rRNA)"/>
    <property type="evidence" value="ECO:0000318"/>
    <property type="project" value="GO_Central"/>
</dbReference>
<dbReference type="GO" id="GO:0006412">
    <property type="term" value="P:translation"/>
    <property type="evidence" value="ECO:0007669"/>
    <property type="project" value="InterPro"/>
</dbReference>
<dbReference type="CDD" id="cd11380">
    <property type="entry name" value="Ribosomal_S8e_like"/>
    <property type="match status" value="1"/>
</dbReference>
<dbReference type="FunFam" id="1.10.168.20:FF:000001">
    <property type="entry name" value="40S ribosomal protein S8"/>
    <property type="match status" value="1"/>
</dbReference>
<dbReference type="Gene3D" id="3.10.290.70">
    <property type="match status" value="1"/>
</dbReference>
<dbReference type="Gene3D" id="1.10.168.20">
    <property type="entry name" value="Ribosomal protein S8e, subdomain"/>
    <property type="match status" value="1"/>
</dbReference>
<dbReference type="InterPro" id="IPR001047">
    <property type="entry name" value="Ribosomal_eS8"/>
</dbReference>
<dbReference type="InterPro" id="IPR042563">
    <property type="entry name" value="Ribosomal_protein_eS8_euk"/>
</dbReference>
<dbReference type="InterPro" id="IPR022309">
    <property type="entry name" value="Ribosomal_Se8/biogenesis_NSA2"/>
</dbReference>
<dbReference type="NCBIfam" id="TIGR00307">
    <property type="entry name" value="eS8"/>
    <property type="match status" value="1"/>
</dbReference>
<dbReference type="PANTHER" id="PTHR10394">
    <property type="entry name" value="40S RIBOSOMAL PROTEIN S8"/>
    <property type="match status" value="1"/>
</dbReference>
<dbReference type="Pfam" id="PF01201">
    <property type="entry name" value="Ribosomal_S8e"/>
    <property type="match status" value="1"/>
</dbReference>
<name>RS8_DICDI</name>